<proteinExistence type="inferred from homology"/>
<organism>
    <name type="scientific">Cupriavidus pinatubonensis (strain JMP 134 / LMG 1197)</name>
    <name type="common">Cupriavidus necator (strain JMP 134)</name>
    <dbReference type="NCBI Taxonomy" id="264198"/>
    <lineage>
        <taxon>Bacteria</taxon>
        <taxon>Pseudomonadati</taxon>
        <taxon>Pseudomonadota</taxon>
        <taxon>Betaproteobacteria</taxon>
        <taxon>Burkholderiales</taxon>
        <taxon>Burkholderiaceae</taxon>
        <taxon>Cupriavidus</taxon>
    </lineage>
</organism>
<accession>Q46YW0</accession>
<reference key="1">
    <citation type="journal article" date="2010" name="PLoS ONE">
        <title>The complete multipartite genome sequence of Cupriavidus necator JMP134, a versatile pollutant degrader.</title>
        <authorList>
            <person name="Lykidis A."/>
            <person name="Perez-Pantoja D."/>
            <person name="Ledger T."/>
            <person name="Mavromatis K."/>
            <person name="Anderson I.J."/>
            <person name="Ivanova N.N."/>
            <person name="Hooper S.D."/>
            <person name="Lapidus A."/>
            <person name="Lucas S."/>
            <person name="Gonzalez B."/>
            <person name="Kyrpides N.C."/>
        </authorList>
    </citation>
    <scope>NUCLEOTIDE SEQUENCE [LARGE SCALE GENOMIC DNA]</scope>
    <source>
        <strain>JMP134 / LMG 1197</strain>
    </source>
</reference>
<protein>
    <recommendedName>
        <fullName evidence="1">3-isopropylmalate dehydrogenase</fullName>
        <ecNumber evidence="1">1.1.1.85</ecNumber>
    </recommendedName>
    <alternativeName>
        <fullName evidence="1">3-IPM-DH</fullName>
    </alternativeName>
    <alternativeName>
        <fullName evidence="1">Beta-IPM dehydrogenase</fullName>
        <shortName evidence="1">IMDH</shortName>
    </alternativeName>
</protein>
<name>LEU3_CUPPJ</name>
<keyword id="KW-0028">Amino-acid biosynthesis</keyword>
<keyword id="KW-0100">Branched-chain amino acid biosynthesis</keyword>
<keyword id="KW-0963">Cytoplasm</keyword>
<keyword id="KW-0432">Leucine biosynthesis</keyword>
<keyword id="KW-0460">Magnesium</keyword>
<keyword id="KW-0464">Manganese</keyword>
<keyword id="KW-0479">Metal-binding</keyword>
<keyword id="KW-0520">NAD</keyword>
<keyword id="KW-0560">Oxidoreductase</keyword>
<feature type="chain" id="PRO_0000083734" description="3-isopropylmalate dehydrogenase">
    <location>
        <begin position="1"/>
        <end position="355"/>
    </location>
</feature>
<feature type="binding site" evidence="1">
    <location>
        <position position="90"/>
    </location>
    <ligand>
        <name>substrate</name>
    </ligand>
</feature>
<feature type="binding site" evidence="1">
    <location>
        <position position="100"/>
    </location>
    <ligand>
        <name>substrate</name>
    </ligand>
</feature>
<feature type="binding site" evidence="1">
    <location>
        <position position="128"/>
    </location>
    <ligand>
        <name>substrate</name>
    </ligand>
</feature>
<feature type="binding site" evidence="1">
    <location>
        <position position="222"/>
    </location>
    <ligand>
        <name>Mg(2+)</name>
        <dbReference type="ChEBI" id="CHEBI:18420"/>
    </ligand>
</feature>
<feature type="binding site" evidence="1">
    <location>
        <position position="222"/>
    </location>
    <ligand>
        <name>substrate</name>
    </ligand>
</feature>
<feature type="binding site" evidence="1">
    <location>
        <position position="246"/>
    </location>
    <ligand>
        <name>Mg(2+)</name>
        <dbReference type="ChEBI" id="CHEBI:18420"/>
    </ligand>
</feature>
<feature type="binding site" evidence="1">
    <location>
        <position position="250"/>
    </location>
    <ligand>
        <name>Mg(2+)</name>
        <dbReference type="ChEBI" id="CHEBI:18420"/>
    </ligand>
</feature>
<feature type="binding site" evidence="1">
    <location>
        <begin position="280"/>
        <end position="292"/>
    </location>
    <ligand>
        <name>NAD(+)</name>
        <dbReference type="ChEBI" id="CHEBI:57540"/>
    </ligand>
</feature>
<feature type="site" description="Important for catalysis" evidence="1">
    <location>
        <position position="135"/>
    </location>
</feature>
<feature type="site" description="Important for catalysis" evidence="1">
    <location>
        <position position="190"/>
    </location>
</feature>
<dbReference type="EC" id="1.1.1.85" evidence="1"/>
<dbReference type="EMBL" id="CP000090">
    <property type="protein sequence ID" value="AAZ61673.1"/>
    <property type="molecule type" value="Genomic_DNA"/>
</dbReference>
<dbReference type="SMR" id="Q46YW0"/>
<dbReference type="STRING" id="264198.Reut_A2311"/>
<dbReference type="KEGG" id="reu:Reut_A2311"/>
<dbReference type="eggNOG" id="COG0473">
    <property type="taxonomic scope" value="Bacteria"/>
</dbReference>
<dbReference type="HOGENOM" id="CLU_031953_0_3_4"/>
<dbReference type="OrthoDB" id="5289857at2"/>
<dbReference type="UniPathway" id="UPA00048">
    <property type="reaction ID" value="UER00072"/>
</dbReference>
<dbReference type="GO" id="GO:0005829">
    <property type="term" value="C:cytosol"/>
    <property type="evidence" value="ECO:0007669"/>
    <property type="project" value="TreeGrafter"/>
</dbReference>
<dbReference type="GO" id="GO:0003862">
    <property type="term" value="F:3-isopropylmalate dehydrogenase activity"/>
    <property type="evidence" value="ECO:0007669"/>
    <property type="project" value="UniProtKB-UniRule"/>
</dbReference>
<dbReference type="GO" id="GO:0000287">
    <property type="term" value="F:magnesium ion binding"/>
    <property type="evidence" value="ECO:0007669"/>
    <property type="project" value="InterPro"/>
</dbReference>
<dbReference type="GO" id="GO:0051287">
    <property type="term" value="F:NAD binding"/>
    <property type="evidence" value="ECO:0007669"/>
    <property type="project" value="InterPro"/>
</dbReference>
<dbReference type="GO" id="GO:0009098">
    <property type="term" value="P:L-leucine biosynthetic process"/>
    <property type="evidence" value="ECO:0007669"/>
    <property type="project" value="UniProtKB-UniRule"/>
</dbReference>
<dbReference type="FunFam" id="3.40.718.10:FF:000028">
    <property type="entry name" value="3-isopropylmalate dehydrogenase"/>
    <property type="match status" value="1"/>
</dbReference>
<dbReference type="Gene3D" id="3.40.718.10">
    <property type="entry name" value="Isopropylmalate Dehydrogenase"/>
    <property type="match status" value="1"/>
</dbReference>
<dbReference type="HAMAP" id="MF_01033">
    <property type="entry name" value="LeuB_type1"/>
    <property type="match status" value="1"/>
</dbReference>
<dbReference type="InterPro" id="IPR019818">
    <property type="entry name" value="IsoCit/isopropylmalate_DH_CS"/>
</dbReference>
<dbReference type="InterPro" id="IPR024084">
    <property type="entry name" value="IsoPropMal-DH-like_dom"/>
</dbReference>
<dbReference type="InterPro" id="IPR004429">
    <property type="entry name" value="Isopropylmalate_DH"/>
</dbReference>
<dbReference type="NCBIfam" id="TIGR00169">
    <property type="entry name" value="leuB"/>
    <property type="match status" value="1"/>
</dbReference>
<dbReference type="PANTHER" id="PTHR42979">
    <property type="entry name" value="3-ISOPROPYLMALATE DEHYDROGENASE"/>
    <property type="match status" value="1"/>
</dbReference>
<dbReference type="PANTHER" id="PTHR42979:SF1">
    <property type="entry name" value="3-ISOPROPYLMALATE DEHYDROGENASE"/>
    <property type="match status" value="1"/>
</dbReference>
<dbReference type="Pfam" id="PF00180">
    <property type="entry name" value="Iso_dh"/>
    <property type="match status" value="1"/>
</dbReference>
<dbReference type="SMART" id="SM01329">
    <property type="entry name" value="Iso_dh"/>
    <property type="match status" value="1"/>
</dbReference>
<dbReference type="SUPFAM" id="SSF53659">
    <property type="entry name" value="Isocitrate/Isopropylmalate dehydrogenase-like"/>
    <property type="match status" value="1"/>
</dbReference>
<dbReference type="PROSITE" id="PS00470">
    <property type="entry name" value="IDH_IMDH"/>
    <property type="match status" value="1"/>
</dbReference>
<gene>
    <name evidence="1" type="primary">leuB</name>
    <name type="ordered locus">Reut_A2311</name>
</gene>
<evidence type="ECO:0000255" key="1">
    <source>
        <dbReference type="HAMAP-Rule" id="MF_01033"/>
    </source>
</evidence>
<sequence>MKIAVLPGDGIGPEIVAEAVKVLNALDEKFEMETAPVGGAGYEAEGHPLPENTLKLAKEADAILFGAVGDWKYDSLERALRPEQAILGLRKHLQLFANFRPAICYPELTGASSLKPELVAGLDILIVRELNGDIYFGQPRGVREAPDGLFKGAREGFDTMRYSEPEIRRIAHVAFQAAAKRGKKLCSVDKANVLETFQFWKDIVIDVSKEYPDVELSHMYVDNAAMQLVKAPKSFDVIVTGNMFGDILSDEAAMLTGSIGMLPSASLDANNKGLYEPSHGSAPDIAGKGVANPLATILSAAMMLRYSLNKAEQADRIENAVKKVLAQGYRTGDILTPGCKQVGTREMGEAVLAAL</sequence>
<comment type="function">
    <text evidence="1">Catalyzes the oxidation of 3-carboxy-2-hydroxy-4-methylpentanoate (3-isopropylmalate) to 3-carboxy-4-methyl-2-oxopentanoate. The product decarboxylates to 4-methyl-2 oxopentanoate.</text>
</comment>
<comment type="catalytic activity">
    <reaction evidence="1">
        <text>(2R,3S)-3-isopropylmalate + NAD(+) = 4-methyl-2-oxopentanoate + CO2 + NADH</text>
        <dbReference type="Rhea" id="RHEA:32271"/>
        <dbReference type="ChEBI" id="CHEBI:16526"/>
        <dbReference type="ChEBI" id="CHEBI:17865"/>
        <dbReference type="ChEBI" id="CHEBI:35121"/>
        <dbReference type="ChEBI" id="CHEBI:57540"/>
        <dbReference type="ChEBI" id="CHEBI:57945"/>
        <dbReference type="EC" id="1.1.1.85"/>
    </reaction>
</comment>
<comment type="cofactor">
    <cofactor evidence="1">
        <name>Mg(2+)</name>
        <dbReference type="ChEBI" id="CHEBI:18420"/>
    </cofactor>
    <cofactor evidence="1">
        <name>Mn(2+)</name>
        <dbReference type="ChEBI" id="CHEBI:29035"/>
    </cofactor>
    <text evidence="1">Binds 1 Mg(2+) or Mn(2+) ion per subunit.</text>
</comment>
<comment type="pathway">
    <text evidence="1">Amino-acid biosynthesis; L-leucine biosynthesis; L-leucine from 3-methyl-2-oxobutanoate: step 3/4.</text>
</comment>
<comment type="subunit">
    <text evidence="1">Homodimer.</text>
</comment>
<comment type="subcellular location">
    <subcellularLocation>
        <location evidence="1">Cytoplasm</location>
    </subcellularLocation>
</comment>
<comment type="similarity">
    <text evidence="1">Belongs to the isocitrate and isopropylmalate dehydrogenases family. LeuB type 1 subfamily.</text>
</comment>